<gene>
    <name evidence="1" type="primary">rimP</name>
    <name type="ordered locus">SSU98_1852</name>
</gene>
<dbReference type="EMBL" id="CP000408">
    <property type="protein sequence ID" value="ABP93010.1"/>
    <property type="molecule type" value="Genomic_DNA"/>
</dbReference>
<dbReference type="SMR" id="A4W3S1"/>
<dbReference type="KEGG" id="ssv:SSU98_1852"/>
<dbReference type="HOGENOM" id="CLU_070525_2_0_9"/>
<dbReference type="GO" id="GO:0005829">
    <property type="term" value="C:cytosol"/>
    <property type="evidence" value="ECO:0007669"/>
    <property type="project" value="TreeGrafter"/>
</dbReference>
<dbReference type="GO" id="GO:0000028">
    <property type="term" value="P:ribosomal small subunit assembly"/>
    <property type="evidence" value="ECO:0007669"/>
    <property type="project" value="TreeGrafter"/>
</dbReference>
<dbReference type="GO" id="GO:0006412">
    <property type="term" value="P:translation"/>
    <property type="evidence" value="ECO:0007669"/>
    <property type="project" value="TreeGrafter"/>
</dbReference>
<dbReference type="CDD" id="cd01734">
    <property type="entry name" value="YlxS_C"/>
    <property type="match status" value="1"/>
</dbReference>
<dbReference type="Gene3D" id="2.30.30.180">
    <property type="entry name" value="Ribosome maturation factor RimP, C-terminal domain"/>
    <property type="match status" value="1"/>
</dbReference>
<dbReference type="Gene3D" id="3.30.300.70">
    <property type="entry name" value="RimP-like superfamily, N-terminal"/>
    <property type="match status" value="1"/>
</dbReference>
<dbReference type="HAMAP" id="MF_01077">
    <property type="entry name" value="RimP"/>
    <property type="match status" value="1"/>
</dbReference>
<dbReference type="InterPro" id="IPR003728">
    <property type="entry name" value="Ribosome_maturation_RimP"/>
</dbReference>
<dbReference type="InterPro" id="IPR028998">
    <property type="entry name" value="RimP_C"/>
</dbReference>
<dbReference type="InterPro" id="IPR036847">
    <property type="entry name" value="RimP_C_sf"/>
</dbReference>
<dbReference type="InterPro" id="IPR028989">
    <property type="entry name" value="RimP_N"/>
</dbReference>
<dbReference type="InterPro" id="IPR035956">
    <property type="entry name" value="RimP_N_sf"/>
</dbReference>
<dbReference type="NCBIfam" id="NF000928">
    <property type="entry name" value="PRK00092.1-2"/>
    <property type="match status" value="1"/>
</dbReference>
<dbReference type="PANTHER" id="PTHR33867">
    <property type="entry name" value="RIBOSOME MATURATION FACTOR RIMP"/>
    <property type="match status" value="1"/>
</dbReference>
<dbReference type="PANTHER" id="PTHR33867:SF1">
    <property type="entry name" value="RIBOSOME MATURATION FACTOR RIMP"/>
    <property type="match status" value="1"/>
</dbReference>
<dbReference type="Pfam" id="PF17384">
    <property type="entry name" value="DUF150_C"/>
    <property type="match status" value="1"/>
</dbReference>
<dbReference type="Pfam" id="PF02576">
    <property type="entry name" value="RimP_N"/>
    <property type="match status" value="1"/>
</dbReference>
<dbReference type="SUPFAM" id="SSF74942">
    <property type="entry name" value="YhbC-like, C-terminal domain"/>
    <property type="match status" value="1"/>
</dbReference>
<dbReference type="SUPFAM" id="SSF75420">
    <property type="entry name" value="YhbC-like, N-terminal domain"/>
    <property type="match status" value="1"/>
</dbReference>
<name>RIMP_STRS2</name>
<comment type="function">
    <text evidence="1">Required for maturation of 30S ribosomal subunits.</text>
</comment>
<comment type="subcellular location">
    <subcellularLocation>
        <location evidence="1">Cytoplasm</location>
    </subcellularLocation>
</comment>
<comment type="similarity">
    <text evidence="1">Belongs to the RimP family.</text>
</comment>
<protein>
    <recommendedName>
        <fullName evidence="1">Ribosome maturation factor RimP</fullName>
    </recommendedName>
</protein>
<sequence>MFMSSIIELVTAAITPAIQTPYELVDVEYGKMGGDYVLSIFVDKEGGISLQDTADLSEKISPILDTIKPDPFPDQYMLEVTSPGLERPLKTADAVEKAVGKYIHVKLYQAIDKIKVFEGTLLSFDGTDLIMEYMDKTRKKEVTIPYQTVAKARLAVKL</sequence>
<proteinExistence type="inferred from homology"/>
<keyword id="KW-0963">Cytoplasm</keyword>
<keyword id="KW-0690">Ribosome biogenesis</keyword>
<accession>A4W3S1</accession>
<organism>
    <name type="scientific">Streptococcus suis (strain 98HAH33)</name>
    <dbReference type="NCBI Taxonomy" id="391296"/>
    <lineage>
        <taxon>Bacteria</taxon>
        <taxon>Bacillati</taxon>
        <taxon>Bacillota</taxon>
        <taxon>Bacilli</taxon>
        <taxon>Lactobacillales</taxon>
        <taxon>Streptococcaceae</taxon>
        <taxon>Streptococcus</taxon>
    </lineage>
</organism>
<feature type="chain" id="PRO_0000384786" description="Ribosome maturation factor RimP">
    <location>
        <begin position="1"/>
        <end position="158"/>
    </location>
</feature>
<evidence type="ECO:0000255" key="1">
    <source>
        <dbReference type="HAMAP-Rule" id="MF_01077"/>
    </source>
</evidence>
<reference key="1">
    <citation type="journal article" date="2007" name="PLoS ONE">
        <title>A glimpse of streptococcal toxic shock syndrome from comparative genomics of S. suis 2 Chinese isolates.</title>
        <authorList>
            <person name="Chen C."/>
            <person name="Tang J."/>
            <person name="Dong W."/>
            <person name="Wang C."/>
            <person name="Feng Y."/>
            <person name="Wang J."/>
            <person name="Zheng F."/>
            <person name="Pan X."/>
            <person name="Liu D."/>
            <person name="Li M."/>
            <person name="Song Y."/>
            <person name="Zhu X."/>
            <person name="Sun H."/>
            <person name="Feng T."/>
            <person name="Guo Z."/>
            <person name="Ju A."/>
            <person name="Ge J."/>
            <person name="Dong Y."/>
            <person name="Sun W."/>
            <person name="Jiang Y."/>
            <person name="Wang J."/>
            <person name="Yan J."/>
            <person name="Yang H."/>
            <person name="Wang X."/>
            <person name="Gao G.F."/>
            <person name="Yang R."/>
            <person name="Wang J."/>
            <person name="Yu J."/>
        </authorList>
    </citation>
    <scope>NUCLEOTIDE SEQUENCE [LARGE SCALE GENOMIC DNA]</scope>
    <source>
        <strain>98HAH33</strain>
    </source>
</reference>